<reference key="1">
    <citation type="journal article" date="2005" name="Nature">
        <title>The map-based sequence of the rice genome.</title>
        <authorList>
            <consortium name="International rice genome sequencing project (IRGSP)"/>
        </authorList>
    </citation>
    <scope>NUCLEOTIDE SEQUENCE [LARGE SCALE GENOMIC DNA]</scope>
    <source>
        <strain>cv. Nipponbare</strain>
    </source>
</reference>
<reference key="2">
    <citation type="journal article" date="2008" name="Nucleic Acids Res.">
        <title>The rice annotation project database (RAP-DB): 2008 update.</title>
        <authorList>
            <consortium name="The rice annotation project (RAP)"/>
        </authorList>
    </citation>
    <scope>GENOME REANNOTATION</scope>
    <source>
        <strain>cv. Nipponbare</strain>
    </source>
</reference>
<reference key="3">
    <citation type="journal article" date="2013" name="Rice">
        <title>Improvement of the Oryza sativa Nipponbare reference genome using next generation sequence and optical map data.</title>
        <authorList>
            <person name="Kawahara Y."/>
            <person name="de la Bastide M."/>
            <person name="Hamilton J.P."/>
            <person name="Kanamori H."/>
            <person name="McCombie W.R."/>
            <person name="Ouyang S."/>
            <person name="Schwartz D.C."/>
            <person name="Tanaka T."/>
            <person name="Wu J."/>
            <person name="Zhou S."/>
            <person name="Childs K.L."/>
            <person name="Davidson R.M."/>
            <person name="Lin H."/>
            <person name="Quesada-Ocampo L."/>
            <person name="Vaillancourt B."/>
            <person name="Sakai H."/>
            <person name="Lee S.S."/>
            <person name="Kim J."/>
            <person name="Numa H."/>
            <person name="Itoh T."/>
            <person name="Buell C.R."/>
            <person name="Matsumoto T."/>
        </authorList>
    </citation>
    <scope>GENOME REANNOTATION</scope>
    <source>
        <strain>cv. Nipponbare</strain>
    </source>
</reference>
<reference key="4">
    <citation type="journal article" date="2009" name="BMC Genomics">
        <title>Rice sHsp genes: genomic organization and expression profiling under stress and development.</title>
        <authorList>
            <person name="Sarkar N.K."/>
            <person name="Kim Y.-K."/>
            <person name="Grover A."/>
        </authorList>
    </citation>
    <scope>INDUCTION</scope>
    <scope>GENE FAMILY</scope>
</reference>
<evidence type="ECO:0000255" key="1"/>
<evidence type="ECO:0000255" key="2">
    <source>
        <dbReference type="PROSITE-ProRule" id="PRU00285"/>
    </source>
</evidence>
<evidence type="ECO:0000256" key="3">
    <source>
        <dbReference type="SAM" id="MobiDB-lite"/>
    </source>
</evidence>
<evidence type="ECO:0000269" key="4">
    <source>
    </source>
</evidence>
<evidence type="ECO:0000305" key="5"/>
<keyword id="KW-0496">Mitochondrion</keyword>
<keyword id="KW-1185">Reference proteome</keyword>
<keyword id="KW-0346">Stress response</keyword>
<keyword id="KW-0809">Transit peptide</keyword>
<name>HS26M_ORYSJ</name>
<sequence length="248" mass="26232">MASTVALKGRPLATLLRQLLAADAPPAATGRPVAAAPAASGKPVTAPAAATATNAASRRLYNTEGAPLRRYDVVDESGTDSGDEYDATDDGRRLTVPFFFSASDVLDPFGAPTSLGRLLALMEDAAVATAAAPGTNGLATAAARRGGWWVAKEDDDAVHLKVSMPGLGKEHVKVWAEQNSLVIKGEGEKDPEDDADAAPPRYTRRIELPADAFKMDKIKAEMKNGVLRVAVPKLKEEERKDVFQVNVE</sequence>
<feature type="transit peptide" description="Mitochondrion" evidence="1">
    <location>
        <begin position="1"/>
        <end position="32"/>
    </location>
</feature>
<feature type="chain" id="PRO_0000387481" description="26.2 kDa heat shock protein, mitochondrial">
    <location>
        <begin position="33"/>
        <end position="248"/>
    </location>
</feature>
<feature type="domain" description="sHSP" evidence="2">
    <location>
        <begin position="139"/>
        <end position="248"/>
    </location>
</feature>
<feature type="region of interest" description="Disordered" evidence="3">
    <location>
        <begin position="26"/>
        <end position="48"/>
    </location>
</feature>
<proteinExistence type="evidence at transcript level"/>
<organism>
    <name type="scientific">Oryza sativa subsp. japonica</name>
    <name type="common">Rice</name>
    <dbReference type="NCBI Taxonomy" id="39947"/>
    <lineage>
        <taxon>Eukaryota</taxon>
        <taxon>Viridiplantae</taxon>
        <taxon>Streptophyta</taxon>
        <taxon>Embryophyta</taxon>
        <taxon>Tracheophyta</taxon>
        <taxon>Spermatophyta</taxon>
        <taxon>Magnoliopsida</taxon>
        <taxon>Liliopsida</taxon>
        <taxon>Poales</taxon>
        <taxon>Poaceae</taxon>
        <taxon>BOP clade</taxon>
        <taxon>Oryzoideae</taxon>
        <taxon>Oryzeae</taxon>
        <taxon>Oryzinae</taxon>
        <taxon>Oryza</taxon>
        <taxon>Oryza sativa</taxon>
    </lineage>
</organism>
<protein>
    <recommendedName>
        <fullName>26.2 kDa heat shock protein, mitochondrial</fullName>
        <shortName>OsHsp26.2</shortName>
    </recommendedName>
</protein>
<accession>Q67X83</accession>
<dbReference type="EMBL" id="AP003488">
    <property type="protein sequence ID" value="BAD37236.1"/>
    <property type="molecule type" value="Genomic_DNA"/>
</dbReference>
<dbReference type="EMBL" id="AP008212">
    <property type="protein sequence ID" value="BAF19076.1"/>
    <property type="molecule type" value="Genomic_DNA"/>
</dbReference>
<dbReference type="EMBL" id="AP014962">
    <property type="status" value="NOT_ANNOTATED_CDS"/>
    <property type="molecule type" value="Genomic_DNA"/>
</dbReference>
<dbReference type="RefSeq" id="XP_015641915.1">
    <property type="nucleotide sequence ID" value="XM_015786429.1"/>
</dbReference>
<dbReference type="SMR" id="Q67X83"/>
<dbReference type="FunCoup" id="Q67X83">
    <property type="interactions" value="656"/>
</dbReference>
<dbReference type="STRING" id="39947.Q67X83"/>
<dbReference type="PaxDb" id="39947-Q67X83"/>
<dbReference type="KEGG" id="dosa:Os06g0219500"/>
<dbReference type="eggNOG" id="KOG0710">
    <property type="taxonomic scope" value="Eukaryota"/>
</dbReference>
<dbReference type="InParanoid" id="Q67X83"/>
<dbReference type="OrthoDB" id="690411at2759"/>
<dbReference type="Proteomes" id="UP000000763">
    <property type="component" value="Chromosome 6"/>
</dbReference>
<dbReference type="Proteomes" id="UP000059680">
    <property type="component" value="Chromosome 6"/>
</dbReference>
<dbReference type="GO" id="GO:0005739">
    <property type="term" value="C:mitochondrion"/>
    <property type="evidence" value="ECO:0007669"/>
    <property type="project" value="UniProtKB-SubCell"/>
</dbReference>
<dbReference type="GO" id="GO:0009408">
    <property type="term" value="P:response to heat"/>
    <property type="evidence" value="ECO:0000270"/>
    <property type="project" value="UniProtKB"/>
</dbReference>
<dbReference type="CDD" id="cd06464">
    <property type="entry name" value="ACD_sHsps-like"/>
    <property type="match status" value="1"/>
</dbReference>
<dbReference type="FunFam" id="2.60.40.790:FF:000047">
    <property type="entry name" value="23.6 kDa heat shock protein mitochondrial"/>
    <property type="match status" value="1"/>
</dbReference>
<dbReference type="Gene3D" id="2.60.40.790">
    <property type="match status" value="1"/>
</dbReference>
<dbReference type="InterPro" id="IPR002068">
    <property type="entry name" value="A-crystallin/Hsp20_dom"/>
</dbReference>
<dbReference type="InterPro" id="IPR044656">
    <property type="entry name" value="HSP14.7/HSP23.5/HSP23.6-like"/>
</dbReference>
<dbReference type="InterPro" id="IPR008978">
    <property type="entry name" value="HSP20-like_chaperone"/>
</dbReference>
<dbReference type="PANTHER" id="PTHR46991">
    <property type="entry name" value="23.5 KDA HEAT SHOCK PROTEIN, MITOCHONDRIAL"/>
    <property type="match status" value="1"/>
</dbReference>
<dbReference type="PANTHER" id="PTHR46991:SF36">
    <property type="entry name" value="26.2 KDA HEAT SHOCK PROTEIN, MITOCHONDRIAL"/>
    <property type="match status" value="1"/>
</dbReference>
<dbReference type="Pfam" id="PF00011">
    <property type="entry name" value="HSP20"/>
    <property type="match status" value="1"/>
</dbReference>
<dbReference type="SUPFAM" id="SSF49764">
    <property type="entry name" value="HSP20-like chaperones"/>
    <property type="match status" value="1"/>
</dbReference>
<dbReference type="PROSITE" id="PS01031">
    <property type="entry name" value="SHSP"/>
    <property type="match status" value="1"/>
</dbReference>
<gene>
    <name type="primary">HSP26.2</name>
    <name type="ordered locus">Os06g0219500</name>
    <name type="ordered locus">LOC_Os06g11610</name>
    <name type="ORF">P0436F11.23</name>
</gene>
<comment type="subunit">
    <text>May form oligomeric structures.</text>
</comment>
<comment type="subcellular location">
    <subcellularLocation>
        <location evidence="5">Mitochondrion</location>
    </subcellularLocation>
</comment>
<comment type="induction">
    <text evidence="4">By heat shock.</text>
</comment>
<comment type="similarity">
    <text evidence="2">Belongs to the small heat shock protein (HSP20) family.</text>
</comment>